<organism>
    <name type="scientific">Carboxydothermus hydrogenoformans (strain ATCC BAA-161 / DSM 6008 / Z-2901)</name>
    <dbReference type="NCBI Taxonomy" id="246194"/>
    <lineage>
        <taxon>Bacteria</taxon>
        <taxon>Bacillati</taxon>
        <taxon>Bacillota</taxon>
        <taxon>Clostridia</taxon>
        <taxon>Thermoanaerobacterales</taxon>
        <taxon>Thermoanaerobacteraceae</taxon>
        <taxon>Carboxydothermus</taxon>
    </lineage>
</organism>
<accession>Q3A9G5</accession>
<evidence type="ECO:0000255" key="1">
    <source>
        <dbReference type="HAMAP-Rule" id="MF_01719"/>
    </source>
</evidence>
<proteinExistence type="inferred from homology"/>
<feature type="chain" id="PRO_0000270276" description="Methionine import ATP-binding protein MetN">
    <location>
        <begin position="1"/>
        <end position="337"/>
    </location>
</feature>
<feature type="domain" description="ABC transporter" evidence="1">
    <location>
        <begin position="4"/>
        <end position="240"/>
    </location>
</feature>
<feature type="binding site" evidence="1">
    <location>
        <begin position="37"/>
        <end position="44"/>
    </location>
    <ligand>
        <name>ATP</name>
        <dbReference type="ChEBI" id="CHEBI:30616"/>
    </ligand>
</feature>
<protein>
    <recommendedName>
        <fullName evidence="1">Methionine import ATP-binding protein MetN</fullName>
        <ecNumber evidence="1">7.4.2.11</ecNumber>
    </recommendedName>
</protein>
<sequence length="337" mass="37512">MIIIKNLEITYPGKRKVKAVDNVSLEIKKGEIFGIIGLSGAGKSSLLRAINGLVRPTSGEVWVDGVEITRLSSKELLNLRQKIGMIFQHFNLLDSRTVFGNVAFPLEIGGYPREQIKKRVMEVLELVGLLDKAESYPRELSGGQKQRVGIARAIAANPKILLCDEPTSALDPQTTGQILKLLAEINQKLGITIVIITHEMRVITEICDRVAVMDNGRVVEEGVVTDVFLNPWHPITKEFVNTVISKELPEEVLAHARTRRPDREVLLLRFAGNTANEPVVSRIIKETGVELSILYGNIGHLKDVPYGILAVEIFGDENRRDKVRQILHELSVKLEVV</sequence>
<dbReference type="EC" id="7.4.2.11" evidence="1"/>
<dbReference type="EMBL" id="CP000141">
    <property type="protein sequence ID" value="ABB15091.1"/>
    <property type="molecule type" value="Genomic_DNA"/>
</dbReference>
<dbReference type="RefSeq" id="WP_011345292.1">
    <property type="nucleotide sequence ID" value="NC_007503.1"/>
</dbReference>
<dbReference type="SMR" id="Q3A9G5"/>
<dbReference type="FunCoup" id="Q3A9G5">
    <property type="interactions" value="328"/>
</dbReference>
<dbReference type="STRING" id="246194.CHY_2422"/>
<dbReference type="KEGG" id="chy:CHY_2422"/>
<dbReference type="eggNOG" id="COG1135">
    <property type="taxonomic scope" value="Bacteria"/>
</dbReference>
<dbReference type="HOGENOM" id="CLU_000604_1_3_9"/>
<dbReference type="InParanoid" id="Q3A9G5"/>
<dbReference type="OrthoDB" id="9802264at2"/>
<dbReference type="Proteomes" id="UP000002706">
    <property type="component" value="Chromosome"/>
</dbReference>
<dbReference type="GO" id="GO:0005886">
    <property type="term" value="C:plasma membrane"/>
    <property type="evidence" value="ECO:0007669"/>
    <property type="project" value="UniProtKB-SubCell"/>
</dbReference>
<dbReference type="GO" id="GO:0033232">
    <property type="term" value="F:ABC-type D-methionine transporter activity"/>
    <property type="evidence" value="ECO:0007669"/>
    <property type="project" value="UniProtKB-EC"/>
</dbReference>
<dbReference type="GO" id="GO:0005524">
    <property type="term" value="F:ATP binding"/>
    <property type="evidence" value="ECO:0007669"/>
    <property type="project" value="UniProtKB-KW"/>
</dbReference>
<dbReference type="GO" id="GO:0016887">
    <property type="term" value="F:ATP hydrolysis activity"/>
    <property type="evidence" value="ECO:0007669"/>
    <property type="project" value="InterPro"/>
</dbReference>
<dbReference type="CDD" id="cd03258">
    <property type="entry name" value="ABC_MetN_methionine_transporter"/>
    <property type="match status" value="1"/>
</dbReference>
<dbReference type="FunFam" id="3.40.50.300:FF:000056">
    <property type="entry name" value="Cell division ATP-binding protein FtsE"/>
    <property type="match status" value="1"/>
</dbReference>
<dbReference type="Gene3D" id="3.30.70.260">
    <property type="match status" value="1"/>
</dbReference>
<dbReference type="Gene3D" id="3.40.50.300">
    <property type="entry name" value="P-loop containing nucleotide triphosphate hydrolases"/>
    <property type="match status" value="1"/>
</dbReference>
<dbReference type="InterPro" id="IPR003593">
    <property type="entry name" value="AAA+_ATPase"/>
</dbReference>
<dbReference type="InterPro" id="IPR003439">
    <property type="entry name" value="ABC_transporter-like_ATP-bd"/>
</dbReference>
<dbReference type="InterPro" id="IPR017871">
    <property type="entry name" value="ABC_transporter-like_CS"/>
</dbReference>
<dbReference type="InterPro" id="IPR045865">
    <property type="entry name" value="ACT-like_dom_sf"/>
</dbReference>
<dbReference type="InterPro" id="IPR041701">
    <property type="entry name" value="MetN_ABC"/>
</dbReference>
<dbReference type="InterPro" id="IPR050086">
    <property type="entry name" value="MetN_ABC_transporter-like"/>
</dbReference>
<dbReference type="InterPro" id="IPR018449">
    <property type="entry name" value="NIL_domain"/>
</dbReference>
<dbReference type="InterPro" id="IPR027417">
    <property type="entry name" value="P-loop_NTPase"/>
</dbReference>
<dbReference type="PANTHER" id="PTHR43166">
    <property type="entry name" value="AMINO ACID IMPORT ATP-BINDING PROTEIN"/>
    <property type="match status" value="1"/>
</dbReference>
<dbReference type="PANTHER" id="PTHR43166:SF30">
    <property type="entry name" value="METHIONINE IMPORT ATP-BINDING PROTEIN METN"/>
    <property type="match status" value="1"/>
</dbReference>
<dbReference type="Pfam" id="PF00005">
    <property type="entry name" value="ABC_tran"/>
    <property type="match status" value="1"/>
</dbReference>
<dbReference type="Pfam" id="PF09383">
    <property type="entry name" value="NIL"/>
    <property type="match status" value="1"/>
</dbReference>
<dbReference type="SMART" id="SM00382">
    <property type="entry name" value="AAA"/>
    <property type="match status" value="1"/>
</dbReference>
<dbReference type="SMART" id="SM00930">
    <property type="entry name" value="NIL"/>
    <property type="match status" value="1"/>
</dbReference>
<dbReference type="SUPFAM" id="SSF55021">
    <property type="entry name" value="ACT-like"/>
    <property type="match status" value="1"/>
</dbReference>
<dbReference type="SUPFAM" id="SSF52540">
    <property type="entry name" value="P-loop containing nucleoside triphosphate hydrolases"/>
    <property type="match status" value="1"/>
</dbReference>
<dbReference type="PROSITE" id="PS00211">
    <property type="entry name" value="ABC_TRANSPORTER_1"/>
    <property type="match status" value="1"/>
</dbReference>
<dbReference type="PROSITE" id="PS50893">
    <property type="entry name" value="ABC_TRANSPORTER_2"/>
    <property type="match status" value="1"/>
</dbReference>
<dbReference type="PROSITE" id="PS51264">
    <property type="entry name" value="METN"/>
    <property type="match status" value="1"/>
</dbReference>
<reference key="1">
    <citation type="journal article" date="2005" name="PLoS Genet.">
        <title>Life in hot carbon monoxide: the complete genome sequence of Carboxydothermus hydrogenoformans Z-2901.</title>
        <authorList>
            <person name="Wu M."/>
            <person name="Ren Q."/>
            <person name="Durkin A.S."/>
            <person name="Daugherty S.C."/>
            <person name="Brinkac L.M."/>
            <person name="Dodson R.J."/>
            <person name="Madupu R."/>
            <person name="Sullivan S.A."/>
            <person name="Kolonay J.F."/>
            <person name="Nelson W.C."/>
            <person name="Tallon L.J."/>
            <person name="Jones K.M."/>
            <person name="Ulrich L.E."/>
            <person name="Gonzalez J.M."/>
            <person name="Zhulin I.B."/>
            <person name="Robb F.T."/>
            <person name="Eisen J.A."/>
        </authorList>
    </citation>
    <scope>NUCLEOTIDE SEQUENCE [LARGE SCALE GENOMIC DNA]</scope>
    <source>
        <strain>ATCC BAA-161 / DSM 6008 / Z-2901</strain>
    </source>
</reference>
<name>METN_CARHZ</name>
<comment type="function">
    <text evidence="1">Part of the ABC transporter complex MetNIQ involved in methionine import. Responsible for energy coupling to the transport system.</text>
</comment>
<comment type="catalytic activity">
    <reaction evidence="1">
        <text>L-methionine(out) + ATP + H2O = L-methionine(in) + ADP + phosphate + H(+)</text>
        <dbReference type="Rhea" id="RHEA:29779"/>
        <dbReference type="ChEBI" id="CHEBI:15377"/>
        <dbReference type="ChEBI" id="CHEBI:15378"/>
        <dbReference type="ChEBI" id="CHEBI:30616"/>
        <dbReference type="ChEBI" id="CHEBI:43474"/>
        <dbReference type="ChEBI" id="CHEBI:57844"/>
        <dbReference type="ChEBI" id="CHEBI:456216"/>
        <dbReference type="EC" id="7.4.2.11"/>
    </reaction>
</comment>
<comment type="catalytic activity">
    <reaction evidence="1">
        <text>D-methionine(out) + ATP + H2O = D-methionine(in) + ADP + phosphate + H(+)</text>
        <dbReference type="Rhea" id="RHEA:29767"/>
        <dbReference type="ChEBI" id="CHEBI:15377"/>
        <dbReference type="ChEBI" id="CHEBI:15378"/>
        <dbReference type="ChEBI" id="CHEBI:30616"/>
        <dbReference type="ChEBI" id="CHEBI:43474"/>
        <dbReference type="ChEBI" id="CHEBI:57932"/>
        <dbReference type="ChEBI" id="CHEBI:456216"/>
        <dbReference type="EC" id="7.4.2.11"/>
    </reaction>
</comment>
<comment type="subunit">
    <text evidence="1">The complex is composed of two ATP-binding proteins (MetN), two transmembrane proteins (MetI) and a solute-binding protein (MetQ).</text>
</comment>
<comment type="subcellular location">
    <subcellularLocation>
        <location evidence="1">Cell membrane</location>
        <topology evidence="1">Peripheral membrane protein</topology>
    </subcellularLocation>
</comment>
<comment type="similarity">
    <text evidence="1">Belongs to the ABC transporter superfamily. Methionine importer (TC 3.A.1.24) family.</text>
</comment>
<keyword id="KW-0029">Amino-acid transport</keyword>
<keyword id="KW-0067">ATP-binding</keyword>
<keyword id="KW-1003">Cell membrane</keyword>
<keyword id="KW-0472">Membrane</keyword>
<keyword id="KW-0547">Nucleotide-binding</keyword>
<keyword id="KW-1185">Reference proteome</keyword>
<keyword id="KW-1278">Translocase</keyword>
<keyword id="KW-0813">Transport</keyword>
<gene>
    <name evidence="1" type="primary">metN</name>
    <name type="ordered locus">CHY_2422</name>
</gene>